<name>GSA_STUS1</name>
<evidence type="ECO:0000255" key="1">
    <source>
        <dbReference type="HAMAP-Rule" id="MF_00375"/>
    </source>
</evidence>
<proteinExistence type="inferred from homology"/>
<comment type="catalytic activity">
    <reaction evidence="1">
        <text>(S)-4-amino-5-oxopentanoate = 5-aminolevulinate</text>
        <dbReference type="Rhea" id="RHEA:14265"/>
        <dbReference type="ChEBI" id="CHEBI:57501"/>
        <dbReference type="ChEBI" id="CHEBI:356416"/>
        <dbReference type="EC" id="5.4.3.8"/>
    </reaction>
</comment>
<comment type="cofactor">
    <cofactor evidence="1">
        <name>pyridoxal 5'-phosphate</name>
        <dbReference type="ChEBI" id="CHEBI:597326"/>
    </cofactor>
</comment>
<comment type="pathway">
    <text evidence="1">Porphyrin-containing compound metabolism; protoporphyrin-IX biosynthesis; 5-aminolevulinate from L-glutamyl-tRNA(Glu): step 2/2.</text>
</comment>
<comment type="subunit">
    <text evidence="1">Homodimer.</text>
</comment>
<comment type="subcellular location">
    <subcellularLocation>
        <location evidence="1">Cytoplasm</location>
    </subcellularLocation>
</comment>
<comment type="similarity">
    <text evidence="1">Belongs to the class-III pyridoxal-phosphate-dependent aminotransferase family. HemL subfamily.</text>
</comment>
<reference key="1">
    <citation type="journal article" date="2008" name="Proc. Natl. Acad. Sci. U.S.A.">
        <title>Nitrogen fixation island and rhizosphere competence traits in the genome of root-associated Pseudomonas stutzeri A1501.</title>
        <authorList>
            <person name="Yan Y."/>
            <person name="Yang J."/>
            <person name="Dou Y."/>
            <person name="Chen M."/>
            <person name="Ping S."/>
            <person name="Peng J."/>
            <person name="Lu W."/>
            <person name="Zhang W."/>
            <person name="Yao Z."/>
            <person name="Li H."/>
            <person name="Liu W."/>
            <person name="He S."/>
            <person name="Geng L."/>
            <person name="Zhang X."/>
            <person name="Yang F."/>
            <person name="Yu H."/>
            <person name="Zhan Y."/>
            <person name="Li D."/>
            <person name="Lin Z."/>
            <person name="Wang Y."/>
            <person name="Elmerich C."/>
            <person name="Lin M."/>
            <person name="Jin Q."/>
        </authorList>
    </citation>
    <scope>NUCLEOTIDE SEQUENCE [LARGE SCALE GENOMIC DNA]</scope>
    <source>
        <strain>A1501</strain>
    </source>
</reference>
<feature type="chain" id="PRO_0000300938" description="Glutamate-1-semialdehyde 2,1-aminomutase">
    <location>
        <begin position="1"/>
        <end position="427"/>
    </location>
</feature>
<feature type="modified residue" description="N6-(pyridoxal phosphate)lysine" evidence="1">
    <location>
        <position position="265"/>
    </location>
</feature>
<organism>
    <name type="scientific">Stutzerimonas stutzeri (strain A1501)</name>
    <name type="common">Pseudomonas stutzeri</name>
    <dbReference type="NCBI Taxonomy" id="379731"/>
    <lineage>
        <taxon>Bacteria</taxon>
        <taxon>Pseudomonadati</taxon>
        <taxon>Pseudomonadota</taxon>
        <taxon>Gammaproteobacteria</taxon>
        <taxon>Pseudomonadales</taxon>
        <taxon>Pseudomonadaceae</taxon>
        <taxon>Stutzerimonas</taxon>
    </lineage>
</organism>
<accession>A4VQY0</accession>
<gene>
    <name evidence="1" type="primary">hemL</name>
    <name type="ordered locus">PST_3758</name>
</gene>
<protein>
    <recommendedName>
        <fullName evidence="1">Glutamate-1-semialdehyde 2,1-aminomutase</fullName>
        <shortName evidence="1">GSA</shortName>
        <ecNumber evidence="1">5.4.3.8</ecNumber>
    </recommendedName>
    <alternativeName>
        <fullName evidence="1">Glutamate-1-semialdehyde aminotransferase</fullName>
        <shortName evidence="1">GSA-AT</shortName>
    </alternativeName>
</protein>
<sequence>MSRSETLFASAQTHIPGGVNSPVRAFRSVGGTPLFLKHAEGAYVIDEDDKRYVDYVGSWGPMILGHSHPQVLDAVRRQLEHGLSYGAPTAMETEMAELVCRLVPSMEMVRMVSSGTEATMSAIRLARGYTGRDAIIKFEGCYHGHSDSLLVKAGSGALTQGVPSSAGVPADFAKHTLTLAYNDLDEVEATLKEKGEQVACIIVEPVAGNMNCVPPAPGFLEGLRRLCDAHGVVLIFDEVMTGFRVALGGAQAYYGVTPDLSTFGKIIGGGMPVGCFGGKRAIMERIAPLGPVYQAGTLSGNPLAMAAGLTTLELISRPGFHDELGAYTSRMLQGLQDRADAAGIPFVTTQVGGMFGLYFSGADDIVTFADVMASDADRFKRFFHLMLEGGVYLAPSAFEAGFTSIAHGDKELAITLDAAERAFAKLK</sequence>
<keyword id="KW-0963">Cytoplasm</keyword>
<keyword id="KW-0413">Isomerase</keyword>
<keyword id="KW-0627">Porphyrin biosynthesis</keyword>
<keyword id="KW-0663">Pyridoxal phosphate</keyword>
<keyword id="KW-1185">Reference proteome</keyword>
<dbReference type="EC" id="5.4.3.8" evidence="1"/>
<dbReference type="EMBL" id="CP000304">
    <property type="protein sequence ID" value="ABP81381.1"/>
    <property type="molecule type" value="Genomic_DNA"/>
</dbReference>
<dbReference type="RefSeq" id="WP_011914766.1">
    <property type="nucleotide sequence ID" value="NC_009434.1"/>
</dbReference>
<dbReference type="SMR" id="A4VQY0"/>
<dbReference type="KEGG" id="psa:PST_3758"/>
<dbReference type="eggNOG" id="COG0001">
    <property type="taxonomic scope" value="Bacteria"/>
</dbReference>
<dbReference type="HOGENOM" id="CLU_016922_1_5_6"/>
<dbReference type="UniPathway" id="UPA00251">
    <property type="reaction ID" value="UER00317"/>
</dbReference>
<dbReference type="Proteomes" id="UP000000233">
    <property type="component" value="Chromosome"/>
</dbReference>
<dbReference type="GO" id="GO:0005737">
    <property type="term" value="C:cytoplasm"/>
    <property type="evidence" value="ECO:0007669"/>
    <property type="project" value="UniProtKB-SubCell"/>
</dbReference>
<dbReference type="GO" id="GO:0042286">
    <property type="term" value="F:glutamate-1-semialdehyde 2,1-aminomutase activity"/>
    <property type="evidence" value="ECO:0007669"/>
    <property type="project" value="UniProtKB-UniRule"/>
</dbReference>
<dbReference type="GO" id="GO:0030170">
    <property type="term" value="F:pyridoxal phosphate binding"/>
    <property type="evidence" value="ECO:0007669"/>
    <property type="project" value="InterPro"/>
</dbReference>
<dbReference type="GO" id="GO:0008483">
    <property type="term" value="F:transaminase activity"/>
    <property type="evidence" value="ECO:0007669"/>
    <property type="project" value="InterPro"/>
</dbReference>
<dbReference type="GO" id="GO:0006782">
    <property type="term" value="P:protoporphyrinogen IX biosynthetic process"/>
    <property type="evidence" value="ECO:0007669"/>
    <property type="project" value="UniProtKB-UniRule"/>
</dbReference>
<dbReference type="CDD" id="cd00610">
    <property type="entry name" value="OAT_like"/>
    <property type="match status" value="1"/>
</dbReference>
<dbReference type="FunFam" id="3.40.640.10:FF:000021">
    <property type="entry name" value="Glutamate-1-semialdehyde 2,1-aminomutase"/>
    <property type="match status" value="1"/>
</dbReference>
<dbReference type="Gene3D" id="3.90.1150.10">
    <property type="entry name" value="Aspartate Aminotransferase, domain 1"/>
    <property type="match status" value="1"/>
</dbReference>
<dbReference type="Gene3D" id="3.40.640.10">
    <property type="entry name" value="Type I PLP-dependent aspartate aminotransferase-like (Major domain)"/>
    <property type="match status" value="1"/>
</dbReference>
<dbReference type="HAMAP" id="MF_00375">
    <property type="entry name" value="HemL_aminotrans_3"/>
    <property type="match status" value="1"/>
</dbReference>
<dbReference type="InterPro" id="IPR004639">
    <property type="entry name" value="4pyrrol_synth_GluAld_NH2Trfase"/>
</dbReference>
<dbReference type="InterPro" id="IPR005814">
    <property type="entry name" value="Aminotrans_3"/>
</dbReference>
<dbReference type="InterPro" id="IPR049704">
    <property type="entry name" value="Aminotrans_3_PPA_site"/>
</dbReference>
<dbReference type="InterPro" id="IPR015424">
    <property type="entry name" value="PyrdxlP-dep_Trfase"/>
</dbReference>
<dbReference type="InterPro" id="IPR015421">
    <property type="entry name" value="PyrdxlP-dep_Trfase_major"/>
</dbReference>
<dbReference type="InterPro" id="IPR015422">
    <property type="entry name" value="PyrdxlP-dep_Trfase_small"/>
</dbReference>
<dbReference type="NCBIfam" id="TIGR00713">
    <property type="entry name" value="hemL"/>
    <property type="match status" value="1"/>
</dbReference>
<dbReference type="NCBIfam" id="NF000818">
    <property type="entry name" value="PRK00062.1"/>
    <property type="match status" value="1"/>
</dbReference>
<dbReference type="PANTHER" id="PTHR43713">
    <property type="entry name" value="GLUTAMATE-1-SEMIALDEHYDE 2,1-AMINOMUTASE"/>
    <property type="match status" value="1"/>
</dbReference>
<dbReference type="PANTHER" id="PTHR43713:SF3">
    <property type="entry name" value="GLUTAMATE-1-SEMIALDEHYDE 2,1-AMINOMUTASE 1, CHLOROPLASTIC-RELATED"/>
    <property type="match status" value="1"/>
</dbReference>
<dbReference type="Pfam" id="PF00202">
    <property type="entry name" value="Aminotran_3"/>
    <property type="match status" value="1"/>
</dbReference>
<dbReference type="SUPFAM" id="SSF53383">
    <property type="entry name" value="PLP-dependent transferases"/>
    <property type="match status" value="1"/>
</dbReference>
<dbReference type="PROSITE" id="PS00600">
    <property type="entry name" value="AA_TRANSFER_CLASS_3"/>
    <property type="match status" value="1"/>
</dbReference>